<reference key="1">
    <citation type="submission" date="2001-12" db="EMBL/GenBank/DDBJ databases">
        <title>A novel form of CRTAC1 expressed in human and mouse brain generated by alternative splicing of a newly identified last exon.</title>
        <authorList>
            <person name="Steck E."/>
            <person name="Richter W."/>
        </authorList>
    </citation>
    <scope>NUCLEOTIDE SEQUENCE [MRNA]</scope>
    <source>
        <strain>BALB/cJ</strain>
        <tissue>Brain</tissue>
    </source>
</reference>
<reference key="2">
    <citation type="journal article" date="2005" name="Science">
        <title>The transcriptional landscape of the mammalian genome.</title>
        <authorList>
            <person name="Carninci P."/>
            <person name="Kasukawa T."/>
            <person name="Katayama S."/>
            <person name="Gough J."/>
            <person name="Frith M.C."/>
            <person name="Maeda N."/>
            <person name="Oyama R."/>
            <person name="Ravasi T."/>
            <person name="Lenhard B."/>
            <person name="Wells C."/>
            <person name="Kodzius R."/>
            <person name="Shimokawa K."/>
            <person name="Bajic V.B."/>
            <person name="Brenner S.E."/>
            <person name="Batalov S."/>
            <person name="Forrest A.R."/>
            <person name="Zavolan M."/>
            <person name="Davis M.J."/>
            <person name="Wilming L.G."/>
            <person name="Aidinis V."/>
            <person name="Allen J.E."/>
            <person name="Ambesi-Impiombato A."/>
            <person name="Apweiler R."/>
            <person name="Aturaliya R.N."/>
            <person name="Bailey T.L."/>
            <person name="Bansal M."/>
            <person name="Baxter L."/>
            <person name="Beisel K.W."/>
            <person name="Bersano T."/>
            <person name="Bono H."/>
            <person name="Chalk A.M."/>
            <person name="Chiu K.P."/>
            <person name="Choudhary V."/>
            <person name="Christoffels A."/>
            <person name="Clutterbuck D.R."/>
            <person name="Crowe M.L."/>
            <person name="Dalla E."/>
            <person name="Dalrymple B.P."/>
            <person name="de Bono B."/>
            <person name="Della Gatta G."/>
            <person name="di Bernardo D."/>
            <person name="Down T."/>
            <person name="Engstrom P."/>
            <person name="Fagiolini M."/>
            <person name="Faulkner G."/>
            <person name="Fletcher C.F."/>
            <person name="Fukushima T."/>
            <person name="Furuno M."/>
            <person name="Futaki S."/>
            <person name="Gariboldi M."/>
            <person name="Georgii-Hemming P."/>
            <person name="Gingeras T.R."/>
            <person name="Gojobori T."/>
            <person name="Green R.E."/>
            <person name="Gustincich S."/>
            <person name="Harbers M."/>
            <person name="Hayashi Y."/>
            <person name="Hensch T.K."/>
            <person name="Hirokawa N."/>
            <person name="Hill D."/>
            <person name="Huminiecki L."/>
            <person name="Iacono M."/>
            <person name="Ikeo K."/>
            <person name="Iwama A."/>
            <person name="Ishikawa T."/>
            <person name="Jakt M."/>
            <person name="Kanapin A."/>
            <person name="Katoh M."/>
            <person name="Kawasawa Y."/>
            <person name="Kelso J."/>
            <person name="Kitamura H."/>
            <person name="Kitano H."/>
            <person name="Kollias G."/>
            <person name="Krishnan S.P."/>
            <person name="Kruger A."/>
            <person name="Kummerfeld S.K."/>
            <person name="Kurochkin I.V."/>
            <person name="Lareau L.F."/>
            <person name="Lazarevic D."/>
            <person name="Lipovich L."/>
            <person name="Liu J."/>
            <person name="Liuni S."/>
            <person name="McWilliam S."/>
            <person name="Madan Babu M."/>
            <person name="Madera M."/>
            <person name="Marchionni L."/>
            <person name="Matsuda H."/>
            <person name="Matsuzawa S."/>
            <person name="Miki H."/>
            <person name="Mignone F."/>
            <person name="Miyake S."/>
            <person name="Morris K."/>
            <person name="Mottagui-Tabar S."/>
            <person name="Mulder N."/>
            <person name="Nakano N."/>
            <person name="Nakauchi H."/>
            <person name="Ng P."/>
            <person name="Nilsson R."/>
            <person name="Nishiguchi S."/>
            <person name="Nishikawa S."/>
            <person name="Nori F."/>
            <person name="Ohara O."/>
            <person name="Okazaki Y."/>
            <person name="Orlando V."/>
            <person name="Pang K.C."/>
            <person name="Pavan W.J."/>
            <person name="Pavesi G."/>
            <person name="Pesole G."/>
            <person name="Petrovsky N."/>
            <person name="Piazza S."/>
            <person name="Reed J."/>
            <person name="Reid J.F."/>
            <person name="Ring B.Z."/>
            <person name="Ringwald M."/>
            <person name="Rost B."/>
            <person name="Ruan Y."/>
            <person name="Salzberg S.L."/>
            <person name="Sandelin A."/>
            <person name="Schneider C."/>
            <person name="Schoenbach C."/>
            <person name="Sekiguchi K."/>
            <person name="Semple C.A."/>
            <person name="Seno S."/>
            <person name="Sessa L."/>
            <person name="Sheng Y."/>
            <person name="Shibata Y."/>
            <person name="Shimada H."/>
            <person name="Shimada K."/>
            <person name="Silva D."/>
            <person name="Sinclair B."/>
            <person name="Sperling S."/>
            <person name="Stupka E."/>
            <person name="Sugiura K."/>
            <person name="Sultana R."/>
            <person name="Takenaka Y."/>
            <person name="Taki K."/>
            <person name="Tammoja K."/>
            <person name="Tan S.L."/>
            <person name="Tang S."/>
            <person name="Taylor M.S."/>
            <person name="Tegner J."/>
            <person name="Teichmann S.A."/>
            <person name="Ueda H.R."/>
            <person name="van Nimwegen E."/>
            <person name="Verardo R."/>
            <person name="Wei C.L."/>
            <person name="Yagi K."/>
            <person name="Yamanishi H."/>
            <person name="Zabarovsky E."/>
            <person name="Zhu S."/>
            <person name="Zimmer A."/>
            <person name="Hide W."/>
            <person name="Bult C."/>
            <person name="Grimmond S.M."/>
            <person name="Teasdale R.D."/>
            <person name="Liu E.T."/>
            <person name="Brusic V."/>
            <person name="Quackenbush J."/>
            <person name="Wahlestedt C."/>
            <person name="Mattick J.S."/>
            <person name="Hume D.A."/>
            <person name="Kai C."/>
            <person name="Sasaki D."/>
            <person name="Tomaru Y."/>
            <person name="Fukuda S."/>
            <person name="Kanamori-Katayama M."/>
            <person name="Suzuki M."/>
            <person name="Aoki J."/>
            <person name="Arakawa T."/>
            <person name="Iida J."/>
            <person name="Imamura K."/>
            <person name="Itoh M."/>
            <person name="Kato T."/>
            <person name="Kawaji H."/>
            <person name="Kawagashira N."/>
            <person name="Kawashima T."/>
            <person name="Kojima M."/>
            <person name="Kondo S."/>
            <person name="Konno H."/>
            <person name="Nakano K."/>
            <person name="Ninomiya N."/>
            <person name="Nishio T."/>
            <person name="Okada M."/>
            <person name="Plessy C."/>
            <person name="Shibata K."/>
            <person name="Shiraki T."/>
            <person name="Suzuki S."/>
            <person name="Tagami M."/>
            <person name="Waki K."/>
            <person name="Watahiki A."/>
            <person name="Okamura-Oho Y."/>
            <person name="Suzuki H."/>
            <person name="Kawai J."/>
            <person name="Hayashizaki Y."/>
        </authorList>
    </citation>
    <scope>NUCLEOTIDE SEQUENCE [LARGE SCALE MRNA]</scope>
    <source>
        <strain>C57BL/6J</strain>
        <tissue>Olfactory bulb</tissue>
        <tissue>Spinal cord</tissue>
        <tissue>Sympathetic ganglion</tissue>
    </source>
</reference>
<reference key="3">
    <citation type="journal article" date="2004" name="Genome Res.">
        <title>The status, quality, and expansion of the NIH full-length cDNA project: the Mammalian Gene Collection (MGC).</title>
        <authorList>
            <consortium name="The MGC Project Team"/>
        </authorList>
    </citation>
    <scope>NUCLEOTIDE SEQUENCE [LARGE SCALE MRNA] OF 143-646</scope>
    <source>
        <tissue>Mammary tumor</tissue>
    </source>
</reference>
<evidence type="ECO:0000250" key="1"/>
<evidence type="ECO:0000255" key="2"/>
<evidence type="ECO:0000305" key="3"/>
<evidence type="ECO:0007829" key="4">
    <source>
        <dbReference type="PDB" id="9ETN"/>
    </source>
</evidence>
<protein>
    <recommendedName>
        <fullName>Cartilage acidic protein 1</fullName>
    </recommendedName>
    <alternativeName>
        <fullName>68 kDa chondrocyte-expressed protein</fullName>
        <shortName>CEP-68</shortName>
    </alternativeName>
    <alternativeName>
        <fullName>ASPIC</fullName>
    </alternativeName>
    <alternativeName>
        <fullName>Protein CRTAC1-B</fullName>
    </alternativeName>
</protein>
<comment type="interaction">
    <interactant intactId="EBI-774415">
        <id>Q8R555</id>
    </interactant>
    <interactant intactId="EBI-773013">
        <id>Q3UHK6</id>
        <label>Tenm4</label>
    </interactant>
    <organismsDiffer>false</organismsDiffer>
    <experiments>2</experiments>
</comment>
<comment type="subcellular location">
    <subcellularLocation>
        <location evidence="1">Secreted</location>
        <location evidence="1">Extracellular space</location>
        <location evidence="1">Extracellular matrix</location>
    </subcellularLocation>
</comment>
<comment type="sequence caution" evidence="3">
    <conflict type="erroneous initiation">
        <sequence resource="EMBL-CDS" id="AAH24472"/>
    </conflict>
</comment>
<sequence length="646" mass="70325">MAPSADPGMVRMALLLLPPLWLLPLTGGSQRAEPMFTAVTNSVLPPDYDSNPTQLNYGVAVTDVDHDGDFEIVVAGYTGPNLVLKYNRAQNRLVNIAVDERSSPYYALRDRQGNAIGVTACDIDGDGREEIYFLNTNNAFSGVATYTDKLFKFRNNRWEDILSDDVNVARGVASLFAGRSVACVDRTGSGRYSIYIANYAYGDVGPDALIEMDPEASDLSRGILALRDVAAEAGVSKYTAGRGVSVGPILSSSASDIFCDNENGPNFLFHNQGNGTFVDTAASAGVDDPHQHGRGVALADFNRDGKVDIVYGNWNGPHRLYLQMSAHGKVRFRDIASPKFSTPSPVRTVIAADFDNDQELEVFFNNIAYRSSSANRLFRVIRREHGDPLIEELNPGDALEPEGRGTGGVVTDFDGDGMLDLILSHGESMAQPLSVFRGNQGFSNNWLRVVPRTRFGAFARGAKVVLYTKKSGAHLRIIDGGSGYLCEMEPVAHFGLGRDEASSVEVTWPDGKMVSRSVASEEMNSVLEILYPQDEDKLQNTAPLECGQGFSQQDNGHCMDTNECIQFPFVCPRDKPVCVNTYGSYRCRTNKRCNRGYEPNEDGTACVAQVAFLGGYSSAAFRLSEPLSQASYLSLGLGLCLQLYAL</sequence>
<feature type="signal peptide" evidence="2">
    <location>
        <begin position="1"/>
        <end position="28"/>
    </location>
</feature>
<feature type="chain" id="PRO_0000007498" description="Cartilage acidic protein 1">
    <location>
        <begin position="29"/>
        <end position="646"/>
    </location>
</feature>
<feature type="repeat" description="FG-GAP 1; atypical">
    <location>
        <begin position="47"/>
        <end position="89"/>
    </location>
</feature>
<feature type="repeat" description="FG-GAP 2; atypical">
    <location>
        <begin position="106"/>
        <end position="148"/>
    </location>
</feature>
<feature type="repeat" description="FG-GAP 3; atypical">
    <location>
        <begin position="284"/>
        <end position="334"/>
    </location>
</feature>
<feature type="repeat" description="FG-GAP 4; atypical">
    <location>
        <begin position="396"/>
        <end position="438"/>
    </location>
</feature>
<feature type="domain" description="EGF-like">
    <location>
        <begin position="560"/>
        <end position="606"/>
    </location>
</feature>
<feature type="disulfide bond" evidence="2">
    <location>
        <begin position="564"/>
        <end position="578"/>
    </location>
</feature>
<feature type="disulfide bond" evidence="2">
    <location>
        <begin position="571"/>
        <end position="587"/>
    </location>
</feature>
<feature type="disulfide bond" evidence="2">
    <location>
        <begin position="593"/>
        <end position="606"/>
    </location>
</feature>
<feature type="sequence conflict" description="In Ref. 2; BAC27817." evidence="3" ref="2">
    <original>R</original>
    <variation>G</variation>
    <location>
        <position position="191"/>
    </location>
</feature>
<feature type="sequence conflict" description="In Ref. 2; BAC27817." evidence="3" ref="2">
    <original>R</original>
    <variation>Q</variation>
    <location>
        <position position="331"/>
    </location>
</feature>
<feature type="sequence conflict" description="In Ref. 2; BAE28721." evidence="3" ref="2">
    <original>S</original>
    <variation>C</variation>
    <location>
        <position position="471"/>
    </location>
</feature>
<feature type="strand" evidence="4">
    <location>
        <begin position="36"/>
        <end position="38"/>
    </location>
</feature>
<feature type="helix" evidence="4">
    <location>
        <begin position="40"/>
        <end position="43"/>
    </location>
</feature>
<feature type="strand" evidence="4">
    <location>
        <begin position="48"/>
        <end position="51"/>
    </location>
</feature>
<feature type="strand" evidence="4">
    <location>
        <begin position="53"/>
        <end position="62"/>
    </location>
</feature>
<feature type="strand" evidence="4">
    <location>
        <begin position="64"/>
        <end position="69"/>
    </location>
</feature>
<feature type="strand" evidence="4">
    <location>
        <begin position="71"/>
        <end position="79"/>
    </location>
</feature>
<feature type="strand" evidence="4">
    <location>
        <begin position="82"/>
        <end position="87"/>
    </location>
</feature>
<feature type="turn" evidence="4">
    <location>
        <begin position="88"/>
        <end position="91"/>
    </location>
</feature>
<feature type="strand" evidence="4">
    <location>
        <begin position="92"/>
        <end position="95"/>
    </location>
</feature>
<feature type="helix" evidence="4">
    <location>
        <begin position="106"/>
        <end position="109"/>
    </location>
</feature>
<feature type="strand" evidence="4">
    <location>
        <begin position="115"/>
        <end position="121"/>
    </location>
</feature>
<feature type="strand" evidence="4">
    <location>
        <begin position="123"/>
        <end position="128"/>
    </location>
</feature>
<feature type="strand" evidence="4">
    <location>
        <begin position="130"/>
        <end position="135"/>
    </location>
</feature>
<feature type="strand" evidence="4">
    <location>
        <begin position="140"/>
        <end position="143"/>
    </location>
</feature>
<feature type="strand" evidence="4">
    <location>
        <begin position="149"/>
        <end position="154"/>
    </location>
</feature>
<feature type="strand" evidence="4">
    <location>
        <begin position="157"/>
        <end position="160"/>
    </location>
</feature>
<feature type="turn" evidence="4">
    <location>
        <begin position="165"/>
        <end position="171"/>
    </location>
</feature>
<feature type="strand" evidence="4">
    <location>
        <begin position="178"/>
        <end position="184"/>
    </location>
</feature>
<feature type="strand" evidence="4">
    <location>
        <begin position="188"/>
        <end position="190"/>
    </location>
</feature>
<feature type="strand" evidence="4">
    <location>
        <begin position="193"/>
        <end position="199"/>
    </location>
</feature>
<feature type="strand" evidence="4">
    <location>
        <begin position="208"/>
        <end position="212"/>
    </location>
</feature>
<feature type="helix" evidence="4">
    <location>
        <begin position="214"/>
        <end position="216"/>
    </location>
</feature>
<feature type="helix" evidence="4">
    <location>
        <begin position="219"/>
        <end position="221"/>
    </location>
</feature>
<feature type="strand" evidence="4">
    <location>
        <begin position="226"/>
        <end position="228"/>
    </location>
</feature>
<feature type="helix" evidence="4">
    <location>
        <begin position="230"/>
        <end position="233"/>
    </location>
</feature>
<feature type="strand" evidence="4">
    <location>
        <begin position="240"/>
        <end position="247"/>
    </location>
</feature>
<feature type="strand" evidence="4">
    <location>
        <begin position="249"/>
        <end position="254"/>
    </location>
</feature>
<feature type="strand" evidence="4">
    <location>
        <begin position="256"/>
        <end position="264"/>
    </location>
</feature>
<feature type="strand" evidence="4">
    <location>
        <begin position="267"/>
        <end position="271"/>
    </location>
</feature>
<feature type="strand" evidence="4">
    <location>
        <begin position="273"/>
        <end position="275"/>
    </location>
</feature>
<feature type="strand" evidence="4">
    <location>
        <begin position="277"/>
        <end position="279"/>
    </location>
</feature>
<feature type="helix" evidence="4">
    <location>
        <begin position="281"/>
        <end position="284"/>
    </location>
</feature>
<feature type="strand" evidence="4">
    <location>
        <begin position="293"/>
        <end position="299"/>
    </location>
</feature>
<feature type="strand" evidence="4">
    <location>
        <begin position="304"/>
        <end position="306"/>
    </location>
</feature>
<feature type="strand" evidence="4">
    <location>
        <begin position="308"/>
        <end position="314"/>
    </location>
</feature>
<feature type="strand" evidence="4">
    <location>
        <begin position="319"/>
        <end position="324"/>
    </location>
</feature>
<feature type="helix" evidence="4">
    <location>
        <begin position="326"/>
        <end position="328"/>
    </location>
</feature>
<feature type="strand" evidence="4">
    <location>
        <begin position="331"/>
        <end position="334"/>
    </location>
</feature>
<feature type="turn" evidence="4">
    <location>
        <begin position="338"/>
        <end position="341"/>
    </location>
</feature>
<feature type="strand" evidence="4">
    <location>
        <begin position="346"/>
        <end position="352"/>
    </location>
</feature>
<feature type="strand" evidence="4">
    <location>
        <begin position="357"/>
        <end position="367"/>
    </location>
</feature>
<feature type="strand" evidence="4">
    <location>
        <begin position="369"/>
        <end position="371"/>
    </location>
</feature>
<feature type="strand" evidence="4">
    <location>
        <begin position="376"/>
        <end position="381"/>
    </location>
</feature>
<feature type="strand" evidence="4">
    <location>
        <begin position="384"/>
        <end position="387"/>
    </location>
</feature>
<feature type="strand" evidence="4">
    <location>
        <begin position="389"/>
        <end position="394"/>
    </location>
</feature>
<feature type="helix" evidence="4">
    <location>
        <begin position="396"/>
        <end position="399"/>
    </location>
</feature>
<feature type="strand" evidence="4">
    <location>
        <begin position="404"/>
        <end position="411"/>
    </location>
</feature>
<feature type="strand" evidence="4">
    <location>
        <begin position="416"/>
        <end position="418"/>
    </location>
</feature>
<feature type="strand" evidence="4">
    <location>
        <begin position="420"/>
        <end position="425"/>
    </location>
</feature>
<feature type="strand" evidence="4">
    <location>
        <begin position="434"/>
        <end position="438"/>
    </location>
</feature>
<feature type="strand" evidence="4">
    <location>
        <begin position="444"/>
        <end position="452"/>
    </location>
</feature>
<feature type="strand" evidence="4">
    <location>
        <begin position="456"/>
        <end position="458"/>
    </location>
</feature>
<feature type="strand" evidence="4">
    <location>
        <begin position="463"/>
        <end position="471"/>
    </location>
</feature>
<feature type="strand" evidence="4">
    <location>
        <begin position="473"/>
        <end position="477"/>
    </location>
</feature>
<feature type="strand" evidence="4">
    <location>
        <begin position="480"/>
        <end position="482"/>
    </location>
</feature>
<feature type="turn" evidence="4">
    <location>
        <begin position="483"/>
        <end position="485"/>
    </location>
</feature>
<feature type="strand" evidence="4">
    <location>
        <begin position="492"/>
        <end position="497"/>
    </location>
</feature>
<feature type="strand" evidence="4">
    <location>
        <begin position="501"/>
        <end position="507"/>
    </location>
</feature>
<feature type="strand" evidence="4">
    <location>
        <begin position="513"/>
        <end position="517"/>
    </location>
</feature>
<feature type="helix" evidence="4">
    <location>
        <begin position="520"/>
        <end position="522"/>
    </location>
</feature>
<feature type="strand" evidence="4">
    <location>
        <begin position="523"/>
        <end position="529"/>
    </location>
</feature>
<feature type="strand" evidence="4">
    <location>
        <begin position="550"/>
        <end position="552"/>
    </location>
</feature>
<feature type="strand" evidence="4">
    <location>
        <begin position="556"/>
        <end position="560"/>
    </location>
</feature>
<feature type="turn" evidence="4">
    <location>
        <begin position="563"/>
        <end position="565"/>
    </location>
</feature>
<feature type="strand" evidence="4">
    <location>
        <begin position="566"/>
        <end position="568"/>
    </location>
</feature>
<feature type="strand" evidence="4">
    <location>
        <begin position="577"/>
        <end position="581"/>
    </location>
</feature>
<feature type="strand" evidence="4">
    <location>
        <begin position="584"/>
        <end position="588"/>
    </location>
</feature>
<organism>
    <name type="scientific">Mus musculus</name>
    <name type="common">Mouse</name>
    <dbReference type="NCBI Taxonomy" id="10090"/>
    <lineage>
        <taxon>Eukaryota</taxon>
        <taxon>Metazoa</taxon>
        <taxon>Chordata</taxon>
        <taxon>Craniata</taxon>
        <taxon>Vertebrata</taxon>
        <taxon>Euteleostomi</taxon>
        <taxon>Mammalia</taxon>
        <taxon>Eutheria</taxon>
        <taxon>Euarchontoglires</taxon>
        <taxon>Glires</taxon>
        <taxon>Rodentia</taxon>
        <taxon>Myomorpha</taxon>
        <taxon>Muroidea</taxon>
        <taxon>Muridae</taxon>
        <taxon>Murinae</taxon>
        <taxon>Mus</taxon>
        <taxon>Mus</taxon>
    </lineage>
</organism>
<dbReference type="EMBL" id="AJ421516">
    <property type="protein sequence ID" value="CAD13395.1"/>
    <property type="molecule type" value="mRNA"/>
</dbReference>
<dbReference type="EMBL" id="AK149020">
    <property type="protein sequence ID" value="BAE28721.1"/>
    <property type="molecule type" value="mRNA"/>
</dbReference>
<dbReference type="EMBL" id="AK032328">
    <property type="protein sequence ID" value="BAC27817.1"/>
    <property type="molecule type" value="mRNA"/>
</dbReference>
<dbReference type="EMBL" id="AK049801">
    <property type="protein sequence ID" value="BAC33924.1"/>
    <property type="molecule type" value="mRNA"/>
</dbReference>
<dbReference type="EMBL" id="AK149069">
    <property type="protein sequence ID" value="BAE28729.1"/>
    <property type="molecule type" value="mRNA"/>
</dbReference>
<dbReference type="EMBL" id="BC024472">
    <property type="protein sequence ID" value="AAH24472.1"/>
    <property type="status" value="ALT_INIT"/>
    <property type="molecule type" value="mRNA"/>
</dbReference>
<dbReference type="CCDS" id="CCDS29828.1"/>
<dbReference type="RefSeq" id="NP_660105.3">
    <property type="nucleotide sequence ID" value="NM_145123.4"/>
</dbReference>
<dbReference type="PDB" id="9ETN">
    <property type="method" value="X-ray"/>
    <property type="resolution" value="1.58 A"/>
    <property type="chains" value="A=33-608"/>
</dbReference>
<dbReference type="PDBsum" id="9ETN"/>
<dbReference type="SMR" id="Q8R555"/>
<dbReference type="FunCoup" id="Q8R555">
    <property type="interactions" value="19"/>
</dbReference>
<dbReference type="IntAct" id="Q8R555">
    <property type="interactions" value="5"/>
</dbReference>
<dbReference type="MINT" id="Q8R555"/>
<dbReference type="STRING" id="10090.ENSMUSP00000044858"/>
<dbReference type="GlyGen" id="Q8R555">
    <property type="glycosylation" value="1 site"/>
</dbReference>
<dbReference type="iPTMnet" id="Q8R555"/>
<dbReference type="PhosphoSitePlus" id="Q8R555"/>
<dbReference type="SwissPalm" id="Q8R555"/>
<dbReference type="CPTAC" id="non-CPTAC-5599"/>
<dbReference type="PaxDb" id="10090-ENSMUSP00000044858"/>
<dbReference type="PeptideAtlas" id="Q8R555"/>
<dbReference type="ProteomicsDB" id="285301"/>
<dbReference type="Antibodypedia" id="2172">
    <property type="antibodies" value="163 antibodies from 27 providers"/>
</dbReference>
<dbReference type="DNASU" id="72832"/>
<dbReference type="Ensembl" id="ENSMUST00000048630.8">
    <property type="protein sequence ID" value="ENSMUSP00000044858.7"/>
    <property type="gene ID" value="ENSMUSG00000042401.9"/>
</dbReference>
<dbReference type="GeneID" id="72832"/>
<dbReference type="KEGG" id="mmu:72832"/>
<dbReference type="UCSC" id="uc008hno.1">
    <property type="organism name" value="mouse"/>
</dbReference>
<dbReference type="AGR" id="MGI:1920082"/>
<dbReference type="CTD" id="55118"/>
<dbReference type="MGI" id="MGI:1920082">
    <property type="gene designation" value="Crtac1"/>
</dbReference>
<dbReference type="VEuPathDB" id="HostDB:ENSMUSG00000042401"/>
<dbReference type="eggNOG" id="ENOG502QQ5V">
    <property type="taxonomic scope" value="Eukaryota"/>
</dbReference>
<dbReference type="GeneTree" id="ENSGT00390000013726"/>
<dbReference type="HOGENOM" id="CLU_027473_0_0_1"/>
<dbReference type="InParanoid" id="Q8R555"/>
<dbReference type="OMA" id="SQLNYGM"/>
<dbReference type="PhylomeDB" id="Q8R555"/>
<dbReference type="TreeFam" id="TF333171"/>
<dbReference type="BioGRID-ORCS" id="72832">
    <property type="hits" value="2 hits in 77 CRISPR screens"/>
</dbReference>
<dbReference type="CD-CODE" id="CE726F99">
    <property type="entry name" value="Postsynaptic density"/>
</dbReference>
<dbReference type="ChiTaRS" id="Cep68">
    <property type="organism name" value="mouse"/>
</dbReference>
<dbReference type="PRO" id="PR:Q8R555"/>
<dbReference type="Proteomes" id="UP000000589">
    <property type="component" value="Chromosome 19"/>
</dbReference>
<dbReference type="RNAct" id="Q8R555">
    <property type="molecule type" value="protein"/>
</dbReference>
<dbReference type="Bgee" id="ENSMUSG00000042401">
    <property type="expression patterns" value="Expressed in molar tooth and 143 other cell types or tissues"/>
</dbReference>
<dbReference type="ExpressionAtlas" id="Q8R555">
    <property type="expression patterns" value="baseline and differential"/>
</dbReference>
<dbReference type="GO" id="GO:0005576">
    <property type="term" value="C:extracellular region"/>
    <property type="evidence" value="ECO:0007669"/>
    <property type="project" value="UniProtKB-KW"/>
</dbReference>
<dbReference type="GO" id="GO:0098978">
    <property type="term" value="C:glutamatergic synapse"/>
    <property type="evidence" value="ECO:0000314"/>
    <property type="project" value="SynGO"/>
</dbReference>
<dbReference type="GO" id="GO:0030426">
    <property type="term" value="C:growth cone"/>
    <property type="evidence" value="ECO:0000314"/>
    <property type="project" value="MGI"/>
</dbReference>
<dbReference type="GO" id="GO:0014069">
    <property type="term" value="C:postsynaptic density"/>
    <property type="evidence" value="ECO:0000314"/>
    <property type="project" value="SynGO"/>
</dbReference>
<dbReference type="GO" id="GO:0005509">
    <property type="term" value="F:calcium ion binding"/>
    <property type="evidence" value="ECO:0007669"/>
    <property type="project" value="InterPro"/>
</dbReference>
<dbReference type="GO" id="GO:0007413">
    <property type="term" value="P:axonal fasciculation"/>
    <property type="evidence" value="ECO:0000315"/>
    <property type="project" value="MGI"/>
</dbReference>
<dbReference type="GO" id="GO:0021772">
    <property type="term" value="P:olfactory bulb development"/>
    <property type="evidence" value="ECO:0000315"/>
    <property type="project" value="MGI"/>
</dbReference>
<dbReference type="GO" id="GO:0051963">
    <property type="term" value="P:regulation of synapse assembly"/>
    <property type="evidence" value="ECO:0000314"/>
    <property type="project" value="SynGO"/>
</dbReference>
<dbReference type="CDD" id="cd00054">
    <property type="entry name" value="EGF_CA"/>
    <property type="match status" value="1"/>
</dbReference>
<dbReference type="Gene3D" id="2.130.10.130">
    <property type="entry name" value="Integrin alpha, N-terminal"/>
    <property type="match status" value="1"/>
</dbReference>
<dbReference type="Gene3D" id="2.90.20.10">
    <property type="entry name" value="Plasmodium vivax P25 domain"/>
    <property type="match status" value="1"/>
</dbReference>
<dbReference type="InterPro" id="IPR027039">
    <property type="entry name" value="Crtac1"/>
</dbReference>
<dbReference type="InterPro" id="IPR001881">
    <property type="entry name" value="EGF-like_Ca-bd_dom"/>
</dbReference>
<dbReference type="InterPro" id="IPR018097">
    <property type="entry name" value="EGF_Ca-bd_CS"/>
</dbReference>
<dbReference type="InterPro" id="IPR013517">
    <property type="entry name" value="FG-GAP"/>
</dbReference>
<dbReference type="InterPro" id="IPR028994">
    <property type="entry name" value="Integrin_alpha_N"/>
</dbReference>
<dbReference type="InterPro" id="IPR049883">
    <property type="entry name" value="NOTCH1_EGF-like"/>
</dbReference>
<dbReference type="InterPro" id="IPR011519">
    <property type="entry name" value="UnbV_ASPIC"/>
</dbReference>
<dbReference type="PANTHER" id="PTHR16026">
    <property type="entry name" value="CARTILAGE ACIDIC PROTEIN 1"/>
    <property type="match status" value="1"/>
</dbReference>
<dbReference type="PANTHER" id="PTHR16026:SF0">
    <property type="entry name" value="CARTILAGE ACIDIC PROTEIN 1"/>
    <property type="match status" value="1"/>
</dbReference>
<dbReference type="Pfam" id="PF07645">
    <property type="entry name" value="EGF_CA"/>
    <property type="match status" value="1"/>
</dbReference>
<dbReference type="Pfam" id="PF13517">
    <property type="entry name" value="FG-GAP_3"/>
    <property type="match status" value="2"/>
</dbReference>
<dbReference type="Pfam" id="PF07593">
    <property type="entry name" value="UnbV_ASPIC"/>
    <property type="match status" value="1"/>
</dbReference>
<dbReference type="SMART" id="SM00179">
    <property type="entry name" value="EGF_CA"/>
    <property type="match status" value="1"/>
</dbReference>
<dbReference type="SUPFAM" id="SSF57196">
    <property type="entry name" value="EGF/Laminin"/>
    <property type="match status" value="1"/>
</dbReference>
<dbReference type="SUPFAM" id="SSF69318">
    <property type="entry name" value="Integrin alpha N-terminal domain"/>
    <property type="match status" value="1"/>
</dbReference>
<dbReference type="PROSITE" id="PS01187">
    <property type="entry name" value="EGF_CA"/>
    <property type="match status" value="1"/>
</dbReference>
<gene>
    <name type="primary">Crtac1</name>
    <name type="synonym">Aspic1</name>
    <name type="synonym">Cep68</name>
</gene>
<name>CRAC1_MOUSE</name>
<keyword id="KW-0002">3D-structure</keyword>
<keyword id="KW-1015">Disulfide bond</keyword>
<keyword id="KW-0245">EGF-like domain</keyword>
<keyword id="KW-0272">Extracellular matrix</keyword>
<keyword id="KW-1185">Reference proteome</keyword>
<keyword id="KW-0677">Repeat</keyword>
<keyword id="KW-0964">Secreted</keyword>
<keyword id="KW-0732">Signal</keyword>
<proteinExistence type="evidence at protein level"/>
<accession>Q8R555</accession>
<accession>Q3UF32</accession>
<accession>Q3UF40</accession>
<accession>Q8BMF1</accession>
<accession>Q8R3V8</accession>